<proteinExistence type="inferred from homology"/>
<accession>Q8GM57</accession>
<accession>D1J883</accession>
<feature type="chain" id="PRO_0000129582" description="Large ribosomal subunit protein uL2">
    <location>
        <begin position="1"/>
        <end position="281"/>
    </location>
</feature>
<feature type="region of interest" description="Disordered" evidence="2">
    <location>
        <begin position="222"/>
        <end position="281"/>
    </location>
</feature>
<evidence type="ECO:0000255" key="1">
    <source>
        <dbReference type="HAMAP-Rule" id="MF_01320"/>
    </source>
</evidence>
<evidence type="ECO:0000256" key="2">
    <source>
        <dbReference type="SAM" id="MobiDB-lite"/>
    </source>
</evidence>
<evidence type="ECO:0000305" key="3"/>
<organism>
    <name type="scientific">Metamycoplasma hominis (strain ATCC 23114 / DSM 25592 / NBRC 14850 / NCTC 10111 / PG21)</name>
    <name type="common">Mycoplasma hominis</name>
    <dbReference type="NCBI Taxonomy" id="347256"/>
    <lineage>
        <taxon>Bacteria</taxon>
        <taxon>Bacillati</taxon>
        <taxon>Mycoplasmatota</taxon>
        <taxon>Mycoplasmoidales</taxon>
        <taxon>Metamycoplasmataceae</taxon>
        <taxon>Metamycoplasma</taxon>
    </lineage>
</organism>
<gene>
    <name evidence="1" type="primary">rplB</name>
    <name type="ordered locus">MHO_2950</name>
</gene>
<name>RL2_METH1</name>
<protein>
    <recommendedName>
        <fullName evidence="1">Large ribosomal subunit protein uL2</fullName>
    </recommendedName>
    <alternativeName>
        <fullName evidence="3">50S ribosomal protein L2</fullName>
    </alternativeName>
</protein>
<dbReference type="EMBL" id="AY083306">
    <property type="protein sequence ID" value="AAM08938.1"/>
    <property type="molecule type" value="Genomic_DNA"/>
</dbReference>
<dbReference type="EMBL" id="FP236530">
    <property type="protein sequence ID" value="CAX37430.1"/>
    <property type="molecule type" value="Genomic_DNA"/>
</dbReference>
<dbReference type="RefSeq" id="WP_012855571.1">
    <property type="nucleotide sequence ID" value="NC_013511.1"/>
</dbReference>
<dbReference type="SMR" id="Q8GM57"/>
<dbReference type="STRING" id="347256.MHO_2950"/>
<dbReference type="PaxDb" id="347256-MHO_2950"/>
<dbReference type="GeneID" id="89679319"/>
<dbReference type="KEGG" id="mho:MHO_2950"/>
<dbReference type="eggNOG" id="COG0090">
    <property type="taxonomic scope" value="Bacteria"/>
</dbReference>
<dbReference type="HOGENOM" id="CLU_036235_2_1_14"/>
<dbReference type="Proteomes" id="UP000002631">
    <property type="component" value="Chromosome"/>
</dbReference>
<dbReference type="GO" id="GO:0015934">
    <property type="term" value="C:large ribosomal subunit"/>
    <property type="evidence" value="ECO:0007669"/>
    <property type="project" value="InterPro"/>
</dbReference>
<dbReference type="GO" id="GO:0019843">
    <property type="term" value="F:rRNA binding"/>
    <property type="evidence" value="ECO:0007669"/>
    <property type="project" value="UniProtKB-UniRule"/>
</dbReference>
<dbReference type="GO" id="GO:0003735">
    <property type="term" value="F:structural constituent of ribosome"/>
    <property type="evidence" value="ECO:0007669"/>
    <property type="project" value="InterPro"/>
</dbReference>
<dbReference type="GO" id="GO:0016740">
    <property type="term" value="F:transferase activity"/>
    <property type="evidence" value="ECO:0007669"/>
    <property type="project" value="InterPro"/>
</dbReference>
<dbReference type="GO" id="GO:0002181">
    <property type="term" value="P:cytoplasmic translation"/>
    <property type="evidence" value="ECO:0007669"/>
    <property type="project" value="TreeGrafter"/>
</dbReference>
<dbReference type="FunFam" id="2.30.30.30:FF:000001">
    <property type="entry name" value="50S ribosomal protein L2"/>
    <property type="match status" value="1"/>
</dbReference>
<dbReference type="FunFam" id="2.40.50.140:FF:000003">
    <property type="entry name" value="50S ribosomal protein L2"/>
    <property type="match status" value="1"/>
</dbReference>
<dbReference type="FunFam" id="4.10.950.10:FF:000001">
    <property type="entry name" value="50S ribosomal protein L2"/>
    <property type="match status" value="1"/>
</dbReference>
<dbReference type="Gene3D" id="2.30.30.30">
    <property type="match status" value="1"/>
</dbReference>
<dbReference type="Gene3D" id="2.40.50.140">
    <property type="entry name" value="Nucleic acid-binding proteins"/>
    <property type="match status" value="1"/>
</dbReference>
<dbReference type="Gene3D" id="4.10.950.10">
    <property type="entry name" value="Ribosomal protein L2, domain 3"/>
    <property type="match status" value="1"/>
</dbReference>
<dbReference type="HAMAP" id="MF_01320_B">
    <property type="entry name" value="Ribosomal_uL2_B"/>
    <property type="match status" value="1"/>
</dbReference>
<dbReference type="InterPro" id="IPR012340">
    <property type="entry name" value="NA-bd_OB-fold"/>
</dbReference>
<dbReference type="InterPro" id="IPR014722">
    <property type="entry name" value="Rib_uL2_dom2"/>
</dbReference>
<dbReference type="InterPro" id="IPR002171">
    <property type="entry name" value="Ribosomal_uL2"/>
</dbReference>
<dbReference type="InterPro" id="IPR005880">
    <property type="entry name" value="Ribosomal_uL2_bac/org-type"/>
</dbReference>
<dbReference type="InterPro" id="IPR022669">
    <property type="entry name" value="Ribosomal_uL2_C"/>
</dbReference>
<dbReference type="InterPro" id="IPR022671">
    <property type="entry name" value="Ribosomal_uL2_CS"/>
</dbReference>
<dbReference type="InterPro" id="IPR014726">
    <property type="entry name" value="Ribosomal_uL2_dom3"/>
</dbReference>
<dbReference type="InterPro" id="IPR022666">
    <property type="entry name" value="Ribosomal_uL2_RNA-bd_dom"/>
</dbReference>
<dbReference type="InterPro" id="IPR008991">
    <property type="entry name" value="Translation_prot_SH3-like_sf"/>
</dbReference>
<dbReference type="NCBIfam" id="TIGR01171">
    <property type="entry name" value="rplB_bact"/>
    <property type="match status" value="1"/>
</dbReference>
<dbReference type="PANTHER" id="PTHR13691:SF5">
    <property type="entry name" value="LARGE RIBOSOMAL SUBUNIT PROTEIN UL2M"/>
    <property type="match status" value="1"/>
</dbReference>
<dbReference type="PANTHER" id="PTHR13691">
    <property type="entry name" value="RIBOSOMAL PROTEIN L2"/>
    <property type="match status" value="1"/>
</dbReference>
<dbReference type="Pfam" id="PF00181">
    <property type="entry name" value="Ribosomal_L2"/>
    <property type="match status" value="1"/>
</dbReference>
<dbReference type="Pfam" id="PF03947">
    <property type="entry name" value="Ribosomal_L2_C"/>
    <property type="match status" value="1"/>
</dbReference>
<dbReference type="PIRSF" id="PIRSF002158">
    <property type="entry name" value="Ribosomal_L2"/>
    <property type="match status" value="1"/>
</dbReference>
<dbReference type="SMART" id="SM01383">
    <property type="entry name" value="Ribosomal_L2"/>
    <property type="match status" value="1"/>
</dbReference>
<dbReference type="SMART" id="SM01382">
    <property type="entry name" value="Ribosomal_L2_C"/>
    <property type="match status" value="1"/>
</dbReference>
<dbReference type="SUPFAM" id="SSF50249">
    <property type="entry name" value="Nucleic acid-binding proteins"/>
    <property type="match status" value="1"/>
</dbReference>
<dbReference type="SUPFAM" id="SSF50104">
    <property type="entry name" value="Translation proteins SH3-like domain"/>
    <property type="match status" value="1"/>
</dbReference>
<dbReference type="PROSITE" id="PS00467">
    <property type="entry name" value="RIBOSOMAL_L2"/>
    <property type="match status" value="1"/>
</dbReference>
<reference key="1">
    <citation type="journal article" date="2002" name="Antimicrob. Agents Chemother.">
        <title>Mutations in 23S rRNA account for intrinsic resistance to macrolides in Mycoplasma hominis and Mycoplasma fermentans and for acquired resistance to macrolides in M. hominis.</title>
        <authorList>
            <person name="Pereyre S."/>
            <person name="Gonzalez P."/>
            <person name="De Barbeyrac B."/>
            <person name="Darnige A."/>
            <person name="Renaudin H."/>
            <person name="Charron A."/>
            <person name="Raherison S."/>
            <person name="Bebear C."/>
            <person name="Bebear C.M."/>
        </authorList>
    </citation>
    <scope>NUCLEOTIDE SEQUENCE [GENOMIC DNA]</scope>
</reference>
<reference key="2">
    <citation type="journal article" date="2009" name="PLoS Genet.">
        <title>Life on arginine for Mycoplasma hominis: clues from its minimal genome and comparison with other human urogenital mycoplasmas.</title>
        <authorList>
            <person name="Pereyre S."/>
            <person name="Sirand-Pugnet P."/>
            <person name="Beven L."/>
            <person name="Charron A."/>
            <person name="Renaudin H."/>
            <person name="Barre A."/>
            <person name="Avenaud P."/>
            <person name="Jacob D."/>
            <person name="Couloux A."/>
            <person name="Barbe V."/>
            <person name="de Daruvar A."/>
            <person name="Blanchard A."/>
            <person name="Bebear C."/>
        </authorList>
    </citation>
    <scope>NUCLEOTIDE SEQUENCE [LARGE SCALE GENOMIC DNA]</scope>
    <source>
        <strain>ATCC 23114 / DSM 25592 / NBRC 14850 / NCTC 10111 / PG21</strain>
    </source>
</reference>
<sequence>MAIKKFKAYTNGRRNMSSLDYQANLTGHAPEKSLLVALPTKAGRNNQGKITTRHQGGRLKRFYRIIDFKRQKDGIPATVKTIEYDPNRSANISLVVYRDGEKRYILSPKGIKIGQVILSGDNVDIQVGNHLPLANIPEGTFVHNIELQPRQGGIIARSAGSSAQILGKDESGRYVILRLKSGEVRKVLAINRATVGEVGNEEHSLVNIGKAGRNRLRGIRPTVRGSAMNPNDHPHGGGEGRQPIGRKSPMTPWGKRALGVKTRATKKASNQFIIRRRKETK</sequence>
<comment type="function">
    <text evidence="1">One of the primary rRNA binding proteins. Required for association of the 30S and 50S subunits to form the 70S ribosome, for tRNA binding and peptide bond formation. It has been suggested to have peptidyltransferase activity; this is somewhat controversial. Makes several contacts with the 16S rRNA in the 70S ribosome.</text>
</comment>
<comment type="subunit">
    <text evidence="1">Part of the 50S ribosomal subunit. Forms a bridge to the 30S subunit in the 70S ribosome.</text>
</comment>
<comment type="similarity">
    <text evidence="1">Belongs to the universal ribosomal protein uL2 family.</text>
</comment>
<keyword id="KW-1185">Reference proteome</keyword>
<keyword id="KW-0687">Ribonucleoprotein</keyword>
<keyword id="KW-0689">Ribosomal protein</keyword>
<keyword id="KW-0694">RNA-binding</keyword>
<keyword id="KW-0699">rRNA-binding</keyword>